<name>TATC_MAGMM</name>
<keyword id="KW-0997">Cell inner membrane</keyword>
<keyword id="KW-1003">Cell membrane</keyword>
<keyword id="KW-0472">Membrane</keyword>
<keyword id="KW-0653">Protein transport</keyword>
<keyword id="KW-1185">Reference proteome</keyword>
<keyword id="KW-0811">Translocation</keyword>
<keyword id="KW-0812">Transmembrane</keyword>
<keyword id="KW-1133">Transmembrane helix</keyword>
<keyword id="KW-0813">Transport</keyword>
<sequence length="271" mass="30477">MNLDVEQKAPLVEHLIELRNRLMISVGAIIVGFILCYSFSEQIFEFLAAPLHEILGPQAKMIYTALHEAFFTQIKVSFFAGLFLAMPVLFTQMWLFIAPGLYQHERSAILPFLFVTPVLFFMGGTLAYYFVFPLAFKFFLGFQSSTIEALPSMREYLSLVIKLIIAFGITFELPVGLLLAIKAGVVSTAGLVDKRKYNIVLAFVAAAILTPPDPFTQVMLAIPIMLMYEISIFFGRGIERKRAEQEAAEEAQWAADHNVDDDDVDHPEHKA</sequence>
<gene>
    <name evidence="1" type="primary">tatC</name>
    <name type="ordered locus">Mmc1_1617</name>
</gene>
<comment type="function">
    <text evidence="1">Part of the twin-arginine translocation (Tat) system that transports large folded proteins containing a characteristic twin-arginine motif in their signal peptide across membranes. Together with TatB, TatC is part of a receptor directly interacting with Tat signal peptides.</text>
</comment>
<comment type="subunit">
    <text evidence="1">The Tat system comprises two distinct complexes: a TatABC complex, containing multiple copies of TatA, TatB and TatC subunits, and a separate TatA complex, containing only TatA subunits. Substrates initially bind to the TatABC complex, which probably triggers association of the separate TatA complex to form the active translocon.</text>
</comment>
<comment type="subcellular location">
    <subcellularLocation>
        <location evidence="1">Cell inner membrane</location>
        <topology evidence="1">Multi-pass membrane protein</topology>
    </subcellularLocation>
</comment>
<comment type="similarity">
    <text evidence="1">Belongs to the TatC family.</text>
</comment>
<proteinExistence type="inferred from homology"/>
<reference key="1">
    <citation type="journal article" date="2009" name="Appl. Environ. Microbiol.">
        <title>Complete genome sequence of the chemolithoautotrophic marine magnetotactic coccus strain MC-1.</title>
        <authorList>
            <person name="Schubbe S."/>
            <person name="Williams T.J."/>
            <person name="Xie G."/>
            <person name="Kiss H.E."/>
            <person name="Brettin T.S."/>
            <person name="Martinez D."/>
            <person name="Ross C.A."/>
            <person name="Schuler D."/>
            <person name="Cox B.L."/>
            <person name="Nealson K.H."/>
            <person name="Bazylinski D.A."/>
        </authorList>
    </citation>
    <scope>NUCLEOTIDE SEQUENCE [LARGE SCALE GENOMIC DNA]</scope>
    <source>
        <strain>ATCC BAA-1437 / JCM 17883 / MC-1</strain>
    </source>
</reference>
<protein>
    <recommendedName>
        <fullName evidence="1">Sec-independent protein translocase protein TatC</fullName>
    </recommendedName>
</protein>
<organism>
    <name type="scientific">Magnetococcus marinus (strain ATCC BAA-1437 / JCM 17883 / MC-1)</name>
    <dbReference type="NCBI Taxonomy" id="156889"/>
    <lineage>
        <taxon>Bacteria</taxon>
        <taxon>Pseudomonadati</taxon>
        <taxon>Pseudomonadota</taxon>
        <taxon>Alphaproteobacteria</taxon>
        <taxon>Magnetococcales</taxon>
        <taxon>Magnetococcaceae</taxon>
        <taxon>Magnetococcus</taxon>
    </lineage>
</organism>
<accession>A0L833</accession>
<dbReference type="EMBL" id="CP000471">
    <property type="protein sequence ID" value="ABK44126.1"/>
    <property type="molecule type" value="Genomic_DNA"/>
</dbReference>
<dbReference type="RefSeq" id="WP_011713274.1">
    <property type="nucleotide sequence ID" value="NC_008576.1"/>
</dbReference>
<dbReference type="SMR" id="A0L833"/>
<dbReference type="STRING" id="156889.Mmc1_1617"/>
<dbReference type="KEGG" id="mgm:Mmc1_1617"/>
<dbReference type="eggNOG" id="COG0805">
    <property type="taxonomic scope" value="Bacteria"/>
</dbReference>
<dbReference type="HOGENOM" id="CLU_031942_1_0_5"/>
<dbReference type="OrthoDB" id="9777044at2"/>
<dbReference type="Proteomes" id="UP000002586">
    <property type="component" value="Chromosome"/>
</dbReference>
<dbReference type="GO" id="GO:0033281">
    <property type="term" value="C:TAT protein transport complex"/>
    <property type="evidence" value="ECO:0007669"/>
    <property type="project" value="UniProtKB-UniRule"/>
</dbReference>
<dbReference type="GO" id="GO:0009977">
    <property type="term" value="F:proton motive force dependent protein transmembrane transporter activity"/>
    <property type="evidence" value="ECO:0007669"/>
    <property type="project" value="TreeGrafter"/>
</dbReference>
<dbReference type="GO" id="GO:0065002">
    <property type="term" value="P:intracellular protein transmembrane transport"/>
    <property type="evidence" value="ECO:0007669"/>
    <property type="project" value="TreeGrafter"/>
</dbReference>
<dbReference type="GO" id="GO:0043953">
    <property type="term" value="P:protein transport by the Tat complex"/>
    <property type="evidence" value="ECO:0007669"/>
    <property type="project" value="UniProtKB-UniRule"/>
</dbReference>
<dbReference type="HAMAP" id="MF_00902">
    <property type="entry name" value="TatC"/>
    <property type="match status" value="1"/>
</dbReference>
<dbReference type="InterPro" id="IPR019820">
    <property type="entry name" value="Sec-indep_translocase_CS"/>
</dbReference>
<dbReference type="InterPro" id="IPR002033">
    <property type="entry name" value="TatC"/>
</dbReference>
<dbReference type="NCBIfam" id="TIGR00945">
    <property type="entry name" value="tatC"/>
    <property type="match status" value="1"/>
</dbReference>
<dbReference type="PANTHER" id="PTHR30371">
    <property type="entry name" value="SEC-INDEPENDENT PROTEIN TRANSLOCASE PROTEIN TATC"/>
    <property type="match status" value="1"/>
</dbReference>
<dbReference type="PANTHER" id="PTHR30371:SF0">
    <property type="entry name" value="SEC-INDEPENDENT PROTEIN TRANSLOCASE PROTEIN TATC, CHLOROPLASTIC-RELATED"/>
    <property type="match status" value="1"/>
</dbReference>
<dbReference type="Pfam" id="PF00902">
    <property type="entry name" value="TatC"/>
    <property type="match status" value="1"/>
</dbReference>
<dbReference type="PRINTS" id="PR01840">
    <property type="entry name" value="TATCFAMILY"/>
</dbReference>
<dbReference type="PROSITE" id="PS01218">
    <property type="entry name" value="TATC"/>
    <property type="match status" value="1"/>
</dbReference>
<feature type="chain" id="PRO_0000412868" description="Sec-independent protein translocase protein TatC">
    <location>
        <begin position="1"/>
        <end position="271"/>
    </location>
</feature>
<feature type="transmembrane region" description="Helical" evidence="1">
    <location>
        <begin position="24"/>
        <end position="44"/>
    </location>
</feature>
<feature type="transmembrane region" description="Helical" evidence="1">
    <location>
        <begin position="78"/>
        <end position="98"/>
    </location>
</feature>
<feature type="transmembrane region" description="Helical" evidence="1">
    <location>
        <begin position="112"/>
        <end position="132"/>
    </location>
</feature>
<feature type="transmembrane region" description="Helical" evidence="1">
    <location>
        <begin position="159"/>
        <end position="179"/>
    </location>
</feature>
<feature type="transmembrane region" description="Helical" evidence="1">
    <location>
        <begin position="215"/>
        <end position="235"/>
    </location>
</feature>
<feature type="region of interest" description="Disordered" evidence="2">
    <location>
        <begin position="247"/>
        <end position="271"/>
    </location>
</feature>
<evidence type="ECO:0000255" key="1">
    <source>
        <dbReference type="HAMAP-Rule" id="MF_00902"/>
    </source>
</evidence>
<evidence type="ECO:0000256" key="2">
    <source>
        <dbReference type="SAM" id="MobiDB-lite"/>
    </source>
</evidence>